<reference key="1">
    <citation type="journal article" date="2005" name="Proteins">
        <title>A novel strategy for the identification of toxinlike structures in spider venom.</title>
        <authorList>
            <person name="Kozlov S.A."/>
            <person name="Malyavka A."/>
            <person name="McCutchen B."/>
            <person name="Lu A."/>
            <person name="Schepers E."/>
            <person name="Herrmann R."/>
            <person name="Grishin E.V."/>
        </authorList>
    </citation>
    <scope>NUCLEOTIDE SEQUENCE [MRNA]</scope>
    <source>
        <tissue>Venom gland</tissue>
    </source>
</reference>
<dbReference type="EMBL" id="AY681312">
    <property type="protein sequence ID" value="AAU93670.1"/>
    <property type="molecule type" value="mRNA"/>
</dbReference>
<dbReference type="ArachnoServer" id="AS000098">
    <property type="toxin name" value="U2-agatoxin-Ao1p"/>
</dbReference>
<dbReference type="GO" id="GO:0005576">
    <property type="term" value="C:extracellular region"/>
    <property type="evidence" value="ECO:0007669"/>
    <property type="project" value="UniProtKB-SubCell"/>
</dbReference>
<dbReference type="GO" id="GO:0090729">
    <property type="term" value="F:toxin activity"/>
    <property type="evidence" value="ECO:0007669"/>
    <property type="project" value="UniProtKB-KW"/>
</dbReference>
<dbReference type="Pfam" id="PF05980">
    <property type="entry name" value="Toxin_7"/>
    <property type="match status" value="1"/>
</dbReference>
<dbReference type="SUPFAM" id="SSF57059">
    <property type="entry name" value="omega toxin-like"/>
    <property type="match status" value="1"/>
</dbReference>
<sequence length="70" mass="7549">MRAIISLILISAMVFSMIAAVPXXEGLQLSEDERGGCLPHNRFCNALSGPRCCSGLKCKELSIWDSICLG</sequence>
<name>TAG2P_AGEOR</name>
<protein>
    <recommendedName>
        <fullName>U2-agatoxin-Ao1p</fullName>
        <shortName>U2-AGTX-Ao1p</shortName>
    </recommendedName>
    <alternativeName>
        <fullName>Agel_15</fullName>
    </alternativeName>
</protein>
<proteinExistence type="evidence at transcript level"/>
<comment type="function">
    <text evidence="1">Insect active toxin causing rapid but reversible paralysis in crickets. No activity shown in mammals. Does not show effect on mammalian voltage-gated calcium channels (By similarity).</text>
</comment>
<comment type="subcellular location">
    <subcellularLocation>
        <location evidence="1">Secreted</location>
    </subcellularLocation>
</comment>
<comment type="tissue specificity">
    <text>Expressed by the venom gland.</text>
</comment>
<comment type="domain">
    <text evidence="1">The presence of a 'disulfide through disulfide knot' structurally defines this protein as a knottin.</text>
</comment>
<comment type="similarity">
    <text evidence="3">Belongs to the neurotoxin 01 (U2-agtx) family.</text>
</comment>
<keyword id="KW-0027">Amidation</keyword>
<keyword id="KW-1015">Disulfide bond</keyword>
<keyword id="KW-0960">Knottin</keyword>
<keyword id="KW-0528">Neurotoxin</keyword>
<keyword id="KW-0964">Secreted</keyword>
<keyword id="KW-0732">Signal</keyword>
<keyword id="KW-0800">Toxin</keyword>
<feature type="signal peptide" evidence="2">
    <location>
        <begin position="1"/>
        <end position="20"/>
    </location>
</feature>
<feature type="propeptide" id="PRO_5000093631" evidence="2">
    <location>
        <begin position="21"/>
        <end position="34"/>
    </location>
</feature>
<feature type="chain" id="PRO_5000093632" description="U2-agatoxin-Ao1p">
    <location>
        <begin position="35"/>
        <end position="69"/>
    </location>
</feature>
<feature type="modified residue" description="Leucine amide" evidence="1">
    <location>
        <position position="69"/>
    </location>
</feature>
<feature type="disulfide bond" evidence="1">
    <location>
        <begin position="37"/>
        <end position="53"/>
    </location>
</feature>
<feature type="disulfide bond" evidence="1">
    <location>
        <begin position="44"/>
        <end position="58"/>
    </location>
</feature>
<feature type="disulfide bond" evidence="1">
    <location>
        <begin position="52"/>
        <end position="68"/>
    </location>
</feature>
<accession>Q5Y4X0</accession>
<evidence type="ECO:0000250" key="1"/>
<evidence type="ECO:0000255" key="2"/>
<evidence type="ECO:0000305" key="3"/>
<organism>
    <name type="scientific">Agelena orientalis</name>
    <name type="common">Funnel-web spider</name>
    <dbReference type="NCBI Taxonomy" id="293813"/>
    <lineage>
        <taxon>Eukaryota</taxon>
        <taxon>Metazoa</taxon>
        <taxon>Ecdysozoa</taxon>
        <taxon>Arthropoda</taxon>
        <taxon>Chelicerata</taxon>
        <taxon>Arachnida</taxon>
        <taxon>Araneae</taxon>
        <taxon>Araneomorphae</taxon>
        <taxon>Entelegynae</taxon>
        <taxon>Agelenidae</taxon>
        <taxon>Agelena</taxon>
    </lineage>
</organism>